<feature type="signal peptide" evidence="1">
    <location>
        <begin position="1"/>
        <end position="20"/>
    </location>
</feature>
<feature type="chain" id="PRO_1000200496" description="UPF0319 protein YccT">
    <location>
        <begin position="21"/>
        <end position="220"/>
    </location>
</feature>
<reference key="1">
    <citation type="journal article" date="2009" name="BMC Genomics">
        <title>Pseudogene accumulation in the evolutionary histories of Salmonella enterica serovars Paratyphi A and Typhi.</title>
        <authorList>
            <person name="Holt K.E."/>
            <person name="Thomson N.R."/>
            <person name="Wain J."/>
            <person name="Langridge G.C."/>
            <person name="Hasan R."/>
            <person name="Bhutta Z.A."/>
            <person name="Quail M.A."/>
            <person name="Norbertczak H."/>
            <person name="Walker D."/>
            <person name="Simmonds M."/>
            <person name="White B."/>
            <person name="Bason N."/>
            <person name="Mungall K."/>
            <person name="Dougan G."/>
            <person name="Parkhill J."/>
        </authorList>
    </citation>
    <scope>NUCLEOTIDE SEQUENCE [LARGE SCALE GENOMIC DNA]</scope>
    <source>
        <strain>AKU_12601</strain>
    </source>
</reference>
<accession>B5BBK3</accession>
<evidence type="ECO:0000255" key="1">
    <source>
        <dbReference type="HAMAP-Rule" id="MF_00789"/>
    </source>
</evidence>
<comment type="similarity">
    <text evidence="1">Belongs to the UPF0319 family.</text>
</comment>
<keyword id="KW-0732">Signal</keyword>
<gene>
    <name evidence="1" type="primary">yccT</name>
    <name type="ordered locus">SSPA1646</name>
</gene>
<organism>
    <name type="scientific">Salmonella paratyphi A (strain AKU_12601)</name>
    <dbReference type="NCBI Taxonomy" id="554290"/>
    <lineage>
        <taxon>Bacteria</taxon>
        <taxon>Pseudomonadati</taxon>
        <taxon>Pseudomonadota</taxon>
        <taxon>Gammaproteobacteria</taxon>
        <taxon>Enterobacterales</taxon>
        <taxon>Enterobacteriaceae</taxon>
        <taxon>Salmonella</taxon>
    </lineage>
</organism>
<protein>
    <recommendedName>
        <fullName evidence="1">UPF0319 protein YccT</fullName>
    </recommendedName>
</protein>
<dbReference type="EMBL" id="FM200053">
    <property type="protein sequence ID" value="CAR59838.1"/>
    <property type="molecule type" value="Genomic_DNA"/>
</dbReference>
<dbReference type="RefSeq" id="WP_000847717.1">
    <property type="nucleotide sequence ID" value="NC_011147.1"/>
</dbReference>
<dbReference type="KEGG" id="sek:SSPA1646"/>
<dbReference type="HOGENOM" id="CLU_073782_2_0_6"/>
<dbReference type="Proteomes" id="UP000001869">
    <property type="component" value="Chromosome"/>
</dbReference>
<dbReference type="HAMAP" id="MF_00789">
    <property type="entry name" value="UPF0319"/>
    <property type="match status" value="1"/>
</dbReference>
<dbReference type="InterPro" id="IPR018635">
    <property type="entry name" value="UPF0319"/>
</dbReference>
<dbReference type="NCBIfam" id="NF047712">
    <property type="entry name" value="CrliSynInhib"/>
    <property type="match status" value="1"/>
</dbReference>
<dbReference type="NCBIfam" id="NF002967">
    <property type="entry name" value="PRK03641.1"/>
    <property type="match status" value="1"/>
</dbReference>
<dbReference type="PANTHER" id="PTHR38108">
    <property type="entry name" value="UPF0319 PROTEIN YCCT"/>
    <property type="match status" value="1"/>
</dbReference>
<dbReference type="PANTHER" id="PTHR38108:SF1">
    <property type="entry name" value="UPF0319 PROTEIN YCCT"/>
    <property type="match status" value="1"/>
</dbReference>
<dbReference type="Pfam" id="PF09829">
    <property type="entry name" value="DUF2057"/>
    <property type="match status" value="1"/>
</dbReference>
<proteinExistence type="inferred from homology"/>
<sequence length="220" mass="24632">MKTGALATFLALCLPVTVFATTLRLSNEVDLLVLDGKKVSSSLLRGAESIELENGPHQLVFRVEKTIRLPGNEERLYISPPLVISFDTQLISQVNFQLPRLENEREASHFNAAPRLALLDGDAMPIPVKLDILAITSTAKVVDYEIETERYNKSAKRASLPQFATMMADDSTLLSDVSELDTVPPQSQTLTEQRLKYCFRLADPQTRHHFLQWAEKQPPS</sequence>
<name>YCCT_SALPK</name>